<dbReference type="EC" id="2.4.2.21" evidence="1"/>
<dbReference type="EMBL" id="CP000142">
    <property type="protein sequence ID" value="ABA87746.1"/>
    <property type="molecule type" value="Genomic_DNA"/>
</dbReference>
<dbReference type="RefSeq" id="WP_011340171.1">
    <property type="nucleotide sequence ID" value="NC_007498.2"/>
</dbReference>
<dbReference type="SMR" id="Q3A798"/>
<dbReference type="STRING" id="338963.Pcar_0486"/>
<dbReference type="KEGG" id="pca:Pcar_0486"/>
<dbReference type="eggNOG" id="COG2038">
    <property type="taxonomic scope" value="Bacteria"/>
</dbReference>
<dbReference type="HOGENOM" id="CLU_002982_0_0_7"/>
<dbReference type="OrthoDB" id="9781491at2"/>
<dbReference type="UniPathway" id="UPA00061">
    <property type="reaction ID" value="UER00516"/>
</dbReference>
<dbReference type="Proteomes" id="UP000002534">
    <property type="component" value="Chromosome"/>
</dbReference>
<dbReference type="GO" id="GO:0008939">
    <property type="term" value="F:nicotinate-nucleotide-dimethylbenzimidazole phosphoribosyltransferase activity"/>
    <property type="evidence" value="ECO:0007669"/>
    <property type="project" value="UniProtKB-UniRule"/>
</dbReference>
<dbReference type="GO" id="GO:0009236">
    <property type="term" value="P:cobalamin biosynthetic process"/>
    <property type="evidence" value="ECO:0007669"/>
    <property type="project" value="UniProtKB-KW"/>
</dbReference>
<dbReference type="CDD" id="cd02439">
    <property type="entry name" value="DMB-PRT_CobT"/>
    <property type="match status" value="1"/>
</dbReference>
<dbReference type="FunFam" id="3.40.50.10210:FF:000001">
    <property type="entry name" value="Nicotinate-nucleotide--dimethylbenzimidazole phosphoribosyltransferase"/>
    <property type="match status" value="1"/>
</dbReference>
<dbReference type="Gene3D" id="1.10.1610.10">
    <property type="match status" value="1"/>
</dbReference>
<dbReference type="Gene3D" id="3.40.50.10210">
    <property type="match status" value="1"/>
</dbReference>
<dbReference type="HAMAP" id="MF_00230">
    <property type="entry name" value="CobT"/>
    <property type="match status" value="1"/>
</dbReference>
<dbReference type="InterPro" id="IPR003200">
    <property type="entry name" value="Nict_dMeBzImd_PRibTrfase"/>
</dbReference>
<dbReference type="InterPro" id="IPR017846">
    <property type="entry name" value="Nict_dMeBzImd_PRibTrfase_bact"/>
</dbReference>
<dbReference type="InterPro" id="IPR023195">
    <property type="entry name" value="Nict_dMeBzImd_PRibTrfase_N"/>
</dbReference>
<dbReference type="InterPro" id="IPR036087">
    <property type="entry name" value="Nict_dMeBzImd_PRibTrfase_sf"/>
</dbReference>
<dbReference type="NCBIfam" id="TIGR03160">
    <property type="entry name" value="cobT_DBIPRT"/>
    <property type="match status" value="1"/>
</dbReference>
<dbReference type="NCBIfam" id="NF000996">
    <property type="entry name" value="PRK00105.1"/>
    <property type="match status" value="1"/>
</dbReference>
<dbReference type="PANTHER" id="PTHR43463">
    <property type="entry name" value="NICOTINATE-NUCLEOTIDE--DIMETHYLBENZIMIDAZOLE PHOSPHORIBOSYLTRANSFERASE"/>
    <property type="match status" value="1"/>
</dbReference>
<dbReference type="PANTHER" id="PTHR43463:SF1">
    <property type="entry name" value="NICOTINATE-NUCLEOTIDE--DIMETHYLBENZIMIDAZOLE PHOSPHORIBOSYLTRANSFERASE"/>
    <property type="match status" value="1"/>
</dbReference>
<dbReference type="Pfam" id="PF02277">
    <property type="entry name" value="DBI_PRT"/>
    <property type="match status" value="1"/>
</dbReference>
<dbReference type="SUPFAM" id="SSF52733">
    <property type="entry name" value="Nicotinate mononucleotide:5,6-dimethylbenzimidazole phosphoribosyltransferase (CobT)"/>
    <property type="match status" value="1"/>
</dbReference>
<sequence length="353" mass="36666">MNLLHTTVARIKPQDENIRRQAKDRLDRLTMPHWALGRLLDLALDLAGMTGSLQPPVDRRLIVTMAGDHGVAAEGVSAFPQEVTGQMVANIANGGAGISTLARVANARVQVVDMGAACDLSDLVDSGQILSRRIAPGTANMALGAAMTREQAVRSLEAGIEIANTFAGEADLFGTGEMGIANTTPSSAIVALLADATADQATGCGTGIDDNRRKHKVSVIERALQTNLPDPHDGLDVLAKVGGFEIGGLAGLILGAAALRKPIIIDGFISTAAALLAQSLAPASVDYMIAAHHSIEQGHQLALARLGKKPLLDLDFRLGEGTGAALAMNLVEGAKRLLTEMATFDEAAVSQGK</sequence>
<evidence type="ECO:0000255" key="1">
    <source>
        <dbReference type="HAMAP-Rule" id="MF_00230"/>
    </source>
</evidence>
<gene>
    <name evidence="1" type="primary">cobT</name>
    <name type="ordered locus">Pcar_0486</name>
</gene>
<protein>
    <recommendedName>
        <fullName evidence="1">Nicotinate-nucleotide--dimethylbenzimidazole phosphoribosyltransferase</fullName>
        <shortName evidence="1">NN:DBI PRT</shortName>
        <ecNumber evidence="1">2.4.2.21</ecNumber>
    </recommendedName>
    <alternativeName>
        <fullName evidence="1">N(1)-alpha-phosphoribosyltransferase</fullName>
    </alternativeName>
</protein>
<comment type="function">
    <text evidence="1">Catalyzes the synthesis of alpha-ribazole-5'-phosphate from nicotinate mononucleotide (NAMN) and 5,6-dimethylbenzimidazole (DMB).</text>
</comment>
<comment type="catalytic activity">
    <reaction evidence="1">
        <text>5,6-dimethylbenzimidazole + nicotinate beta-D-ribonucleotide = alpha-ribazole 5'-phosphate + nicotinate + H(+)</text>
        <dbReference type="Rhea" id="RHEA:11196"/>
        <dbReference type="ChEBI" id="CHEBI:15378"/>
        <dbReference type="ChEBI" id="CHEBI:15890"/>
        <dbReference type="ChEBI" id="CHEBI:32544"/>
        <dbReference type="ChEBI" id="CHEBI:57502"/>
        <dbReference type="ChEBI" id="CHEBI:57918"/>
        <dbReference type="EC" id="2.4.2.21"/>
    </reaction>
</comment>
<comment type="pathway">
    <text evidence="1">Nucleoside biosynthesis; alpha-ribazole biosynthesis; alpha-ribazole from 5,6-dimethylbenzimidazole: step 1/2.</text>
</comment>
<comment type="similarity">
    <text evidence="1">Belongs to the CobT family.</text>
</comment>
<accession>Q3A798</accession>
<proteinExistence type="inferred from homology"/>
<keyword id="KW-0169">Cobalamin biosynthesis</keyword>
<keyword id="KW-0328">Glycosyltransferase</keyword>
<keyword id="KW-1185">Reference proteome</keyword>
<keyword id="KW-0808">Transferase</keyword>
<reference key="1">
    <citation type="submission" date="2005-10" db="EMBL/GenBank/DDBJ databases">
        <title>Complete sequence of Pelobacter carbinolicus DSM 2380.</title>
        <authorList>
            <person name="Copeland A."/>
            <person name="Lucas S."/>
            <person name="Lapidus A."/>
            <person name="Barry K."/>
            <person name="Detter J.C."/>
            <person name="Glavina T."/>
            <person name="Hammon N."/>
            <person name="Israni S."/>
            <person name="Pitluck S."/>
            <person name="Chertkov O."/>
            <person name="Schmutz J."/>
            <person name="Larimer F."/>
            <person name="Land M."/>
            <person name="Kyrpides N."/>
            <person name="Ivanova N."/>
            <person name="Richardson P."/>
        </authorList>
    </citation>
    <scope>NUCLEOTIDE SEQUENCE [LARGE SCALE GENOMIC DNA]</scope>
    <source>
        <strain>DSM 2380 / NBRC 103641 / GraBd1</strain>
    </source>
</reference>
<name>COBT_SYNC1</name>
<organism>
    <name type="scientific">Syntrophotalea carbinolica (strain DSM 2380 / NBRC 103641 / GraBd1)</name>
    <name type="common">Pelobacter carbinolicus</name>
    <dbReference type="NCBI Taxonomy" id="338963"/>
    <lineage>
        <taxon>Bacteria</taxon>
        <taxon>Pseudomonadati</taxon>
        <taxon>Thermodesulfobacteriota</taxon>
        <taxon>Desulfuromonadia</taxon>
        <taxon>Desulfuromonadales</taxon>
        <taxon>Syntrophotaleaceae</taxon>
        <taxon>Syntrophotalea</taxon>
    </lineage>
</organism>
<feature type="chain" id="PRO_1000021609" description="Nicotinate-nucleotide--dimethylbenzimidazole phosphoribosyltransferase">
    <location>
        <begin position="1"/>
        <end position="353"/>
    </location>
</feature>
<feature type="active site" description="Proton acceptor" evidence="1">
    <location>
        <position position="320"/>
    </location>
</feature>